<organism>
    <name type="scientific">Bacillus licheniformis (strain ATCC 14580 / DSM 13 / JCM 2505 / CCUG 7422 / NBRC 12200 / NCIMB 9375 / NCTC 10341 / NRRL NRS-1264 / Gibson 46)</name>
    <dbReference type="NCBI Taxonomy" id="279010"/>
    <lineage>
        <taxon>Bacteria</taxon>
        <taxon>Bacillati</taxon>
        <taxon>Bacillota</taxon>
        <taxon>Bacilli</taxon>
        <taxon>Bacillales</taxon>
        <taxon>Bacillaceae</taxon>
        <taxon>Bacillus</taxon>
    </lineage>
</organism>
<sequence>MGKVYVFDHPLIQHKLTYIRDVKTGTKEFRELVDEVATLMAFEITRDLPLEEVNVETPVQMAKSNVIAGKKLGVVPILRAGLGMVDGILKLIPAAKVGHVGLYRDPETLKPVEYYVKLPSDVEEREFIVVDPMLATGGSAVEALNSLKKRGAKNIRFMCLIAAPEGVDEVQKHHPDVDIYIAALDEKLNEKGYIVPGLGDAGDRMFGTK</sequence>
<gene>
    <name evidence="1" type="primary">upp</name>
    <name type="ordered locus">BLi03934</name>
    <name type="ordered locus">BL03992</name>
</gene>
<comment type="function">
    <text evidence="1">Catalyzes the conversion of uracil and 5-phospho-alpha-D-ribose 1-diphosphate (PRPP) to UMP and diphosphate.</text>
</comment>
<comment type="catalytic activity">
    <reaction evidence="1">
        <text>UMP + diphosphate = 5-phospho-alpha-D-ribose 1-diphosphate + uracil</text>
        <dbReference type="Rhea" id="RHEA:13017"/>
        <dbReference type="ChEBI" id="CHEBI:17568"/>
        <dbReference type="ChEBI" id="CHEBI:33019"/>
        <dbReference type="ChEBI" id="CHEBI:57865"/>
        <dbReference type="ChEBI" id="CHEBI:58017"/>
        <dbReference type="EC" id="2.4.2.9"/>
    </reaction>
</comment>
<comment type="cofactor">
    <cofactor evidence="1">
        <name>Mg(2+)</name>
        <dbReference type="ChEBI" id="CHEBI:18420"/>
    </cofactor>
    <text evidence="1">Binds 1 Mg(2+) ion per subunit. The magnesium is bound as Mg-PRPP.</text>
</comment>
<comment type="activity regulation">
    <text evidence="1">Allosterically activated by GTP.</text>
</comment>
<comment type="pathway">
    <text evidence="1">Pyrimidine metabolism; UMP biosynthesis via salvage pathway; UMP from uracil: step 1/1.</text>
</comment>
<comment type="similarity">
    <text evidence="1">Belongs to the UPRTase family.</text>
</comment>
<accession>Q65DW6</accession>
<accession>Q62PD8</accession>
<evidence type="ECO:0000255" key="1">
    <source>
        <dbReference type="HAMAP-Rule" id="MF_01218"/>
    </source>
</evidence>
<name>UPP_BACLD</name>
<keyword id="KW-0021">Allosteric enzyme</keyword>
<keyword id="KW-0328">Glycosyltransferase</keyword>
<keyword id="KW-0342">GTP-binding</keyword>
<keyword id="KW-0460">Magnesium</keyword>
<keyword id="KW-0547">Nucleotide-binding</keyword>
<keyword id="KW-1185">Reference proteome</keyword>
<keyword id="KW-0808">Transferase</keyword>
<dbReference type="EC" id="2.4.2.9" evidence="1"/>
<dbReference type="EMBL" id="CP000002">
    <property type="protein sequence ID" value="AAU25373.1"/>
    <property type="molecule type" value="Genomic_DNA"/>
</dbReference>
<dbReference type="EMBL" id="AE017333">
    <property type="protein sequence ID" value="AAU42748.1"/>
    <property type="molecule type" value="Genomic_DNA"/>
</dbReference>
<dbReference type="RefSeq" id="WP_003186017.1">
    <property type="nucleotide sequence ID" value="NC_006322.1"/>
</dbReference>
<dbReference type="SMR" id="Q65DW6"/>
<dbReference type="STRING" id="279010.BL03992"/>
<dbReference type="GeneID" id="92859493"/>
<dbReference type="KEGG" id="bld:BLi03934"/>
<dbReference type="KEGG" id="bli:BL03992"/>
<dbReference type="eggNOG" id="COG0035">
    <property type="taxonomic scope" value="Bacteria"/>
</dbReference>
<dbReference type="HOGENOM" id="CLU_067096_2_2_9"/>
<dbReference type="UniPathway" id="UPA00574">
    <property type="reaction ID" value="UER00636"/>
</dbReference>
<dbReference type="Proteomes" id="UP000000606">
    <property type="component" value="Chromosome"/>
</dbReference>
<dbReference type="GO" id="GO:0005525">
    <property type="term" value="F:GTP binding"/>
    <property type="evidence" value="ECO:0007669"/>
    <property type="project" value="UniProtKB-KW"/>
</dbReference>
<dbReference type="GO" id="GO:0000287">
    <property type="term" value="F:magnesium ion binding"/>
    <property type="evidence" value="ECO:0007669"/>
    <property type="project" value="UniProtKB-UniRule"/>
</dbReference>
<dbReference type="GO" id="GO:0004845">
    <property type="term" value="F:uracil phosphoribosyltransferase activity"/>
    <property type="evidence" value="ECO:0007669"/>
    <property type="project" value="UniProtKB-UniRule"/>
</dbReference>
<dbReference type="GO" id="GO:0044206">
    <property type="term" value="P:UMP salvage"/>
    <property type="evidence" value="ECO:0007669"/>
    <property type="project" value="UniProtKB-UniRule"/>
</dbReference>
<dbReference type="GO" id="GO:0006223">
    <property type="term" value="P:uracil salvage"/>
    <property type="evidence" value="ECO:0007669"/>
    <property type="project" value="InterPro"/>
</dbReference>
<dbReference type="CDD" id="cd06223">
    <property type="entry name" value="PRTases_typeI"/>
    <property type="match status" value="1"/>
</dbReference>
<dbReference type="FunFam" id="3.40.50.2020:FF:000003">
    <property type="entry name" value="Uracil phosphoribosyltransferase"/>
    <property type="match status" value="1"/>
</dbReference>
<dbReference type="Gene3D" id="3.40.50.2020">
    <property type="match status" value="1"/>
</dbReference>
<dbReference type="HAMAP" id="MF_01218_B">
    <property type="entry name" value="Upp_B"/>
    <property type="match status" value="1"/>
</dbReference>
<dbReference type="InterPro" id="IPR000836">
    <property type="entry name" value="PRibTrfase_dom"/>
</dbReference>
<dbReference type="InterPro" id="IPR029057">
    <property type="entry name" value="PRTase-like"/>
</dbReference>
<dbReference type="InterPro" id="IPR034332">
    <property type="entry name" value="Upp_B"/>
</dbReference>
<dbReference type="InterPro" id="IPR050054">
    <property type="entry name" value="UPRTase/APRTase"/>
</dbReference>
<dbReference type="InterPro" id="IPR005765">
    <property type="entry name" value="Ura_phspho_trans"/>
</dbReference>
<dbReference type="NCBIfam" id="NF001097">
    <property type="entry name" value="PRK00129.1"/>
    <property type="match status" value="1"/>
</dbReference>
<dbReference type="NCBIfam" id="TIGR01091">
    <property type="entry name" value="upp"/>
    <property type="match status" value="1"/>
</dbReference>
<dbReference type="PANTHER" id="PTHR32315">
    <property type="entry name" value="ADENINE PHOSPHORIBOSYLTRANSFERASE"/>
    <property type="match status" value="1"/>
</dbReference>
<dbReference type="PANTHER" id="PTHR32315:SF4">
    <property type="entry name" value="URACIL PHOSPHORIBOSYLTRANSFERASE, CHLOROPLASTIC"/>
    <property type="match status" value="1"/>
</dbReference>
<dbReference type="Pfam" id="PF14681">
    <property type="entry name" value="UPRTase"/>
    <property type="match status" value="1"/>
</dbReference>
<dbReference type="SUPFAM" id="SSF53271">
    <property type="entry name" value="PRTase-like"/>
    <property type="match status" value="1"/>
</dbReference>
<protein>
    <recommendedName>
        <fullName evidence="1">Uracil phosphoribosyltransferase</fullName>
        <ecNumber evidence="1">2.4.2.9</ecNumber>
    </recommendedName>
    <alternativeName>
        <fullName evidence="1">UMP pyrophosphorylase</fullName>
    </alternativeName>
    <alternativeName>
        <fullName evidence="1">UPRTase</fullName>
    </alternativeName>
</protein>
<feature type="chain" id="PRO_1000053677" description="Uracil phosphoribosyltransferase">
    <location>
        <begin position="1"/>
        <end position="209"/>
    </location>
</feature>
<feature type="binding site" evidence="1">
    <location>
        <position position="79"/>
    </location>
    <ligand>
        <name>5-phospho-alpha-D-ribose 1-diphosphate</name>
        <dbReference type="ChEBI" id="CHEBI:58017"/>
    </ligand>
</feature>
<feature type="binding site" evidence="1">
    <location>
        <position position="104"/>
    </location>
    <ligand>
        <name>5-phospho-alpha-D-ribose 1-diphosphate</name>
        <dbReference type="ChEBI" id="CHEBI:58017"/>
    </ligand>
</feature>
<feature type="binding site" evidence="1">
    <location>
        <begin position="131"/>
        <end position="139"/>
    </location>
    <ligand>
        <name>5-phospho-alpha-D-ribose 1-diphosphate</name>
        <dbReference type="ChEBI" id="CHEBI:58017"/>
    </ligand>
</feature>
<feature type="binding site" evidence="1">
    <location>
        <position position="194"/>
    </location>
    <ligand>
        <name>uracil</name>
        <dbReference type="ChEBI" id="CHEBI:17568"/>
    </ligand>
</feature>
<feature type="binding site" evidence="1">
    <location>
        <begin position="199"/>
        <end position="201"/>
    </location>
    <ligand>
        <name>uracil</name>
        <dbReference type="ChEBI" id="CHEBI:17568"/>
    </ligand>
</feature>
<feature type="binding site" evidence="1">
    <location>
        <position position="200"/>
    </location>
    <ligand>
        <name>5-phospho-alpha-D-ribose 1-diphosphate</name>
        <dbReference type="ChEBI" id="CHEBI:58017"/>
    </ligand>
</feature>
<proteinExistence type="inferred from homology"/>
<reference key="1">
    <citation type="journal article" date="2004" name="J. Mol. Microbiol. Biotechnol.">
        <title>The complete genome sequence of Bacillus licheniformis DSM13, an organism with great industrial potential.</title>
        <authorList>
            <person name="Veith B."/>
            <person name="Herzberg C."/>
            <person name="Steckel S."/>
            <person name="Feesche J."/>
            <person name="Maurer K.H."/>
            <person name="Ehrenreich P."/>
            <person name="Baeumer S."/>
            <person name="Henne A."/>
            <person name="Liesegang H."/>
            <person name="Merkl R."/>
            <person name="Ehrenreich A."/>
            <person name="Gottschalk G."/>
        </authorList>
    </citation>
    <scope>NUCLEOTIDE SEQUENCE [LARGE SCALE GENOMIC DNA]</scope>
    <source>
        <strain>ATCC 14580 / DSM 13 / JCM 2505 / CCUG 7422 / NBRC 12200 / NCIMB 9375 / NCTC 10341 / NRRL NRS-1264 / Gibson 46</strain>
    </source>
</reference>
<reference key="2">
    <citation type="journal article" date="2004" name="Genome Biol.">
        <title>Complete genome sequence of the industrial bacterium Bacillus licheniformis and comparisons with closely related Bacillus species.</title>
        <authorList>
            <person name="Rey M.W."/>
            <person name="Ramaiya P."/>
            <person name="Nelson B.A."/>
            <person name="Brody-Karpin S.D."/>
            <person name="Zaretsky E.J."/>
            <person name="Tang M."/>
            <person name="Lopez de Leon A."/>
            <person name="Xiang H."/>
            <person name="Gusti V."/>
            <person name="Clausen I.G."/>
            <person name="Olsen P.B."/>
            <person name="Rasmussen M.D."/>
            <person name="Andersen J.T."/>
            <person name="Joergensen P.L."/>
            <person name="Larsen T.S."/>
            <person name="Sorokin A."/>
            <person name="Bolotin A."/>
            <person name="Lapidus A."/>
            <person name="Galleron N."/>
            <person name="Ehrlich S.D."/>
            <person name="Berka R.M."/>
        </authorList>
    </citation>
    <scope>NUCLEOTIDE SEQUENCE [LARGE SCALE GENOMIC DNA]</scope>
    <source>
        <strain>ATCC 14580 / DSM 13 / JCM 2505 / CCUG 7422 / NBRC 12200 / NCIMB 9375 / NCTC 10341 / NRRL NRS-1264 / Gibson 46</strain>
    </source>
</reference>